<accession>P41901</accession>
<accession>D6VUJ4</accession>
<keyword id="KW-0175">Coiled coil</keyword>
<keyword id="KW-0342">GTP-binding</keyword>
<keyword id="KW-0472">Membrane</keyword>
<keyword id="KW-0547">Nucleotide-binding</keyword>
<keyword id="KW-1185">Reference proteome</keyword>
<keyword id="KW-0749">Sporulation</keyword>
<organism>
    <name type="scientific">Saccharomyces cerevisiae (strain ATCC 204508 / S288c)</name>
    <name type="common">Baker's yeast</name>
    <dbReference type="NCBI Taxonomy" id="559292"/>
    <lineage>
        <taxon>Eukaryota</taxon>
        <taxon>Fungi</taxon>
        <taxon>Dikarya</taxon>
        <taxon>Ascomycota</taxon>
        <taxon>Saccharomycotina</taxon>
        <taxon>Saccharomycetes</taxon>
        <taxon>Saccharomycetales</taxon>
        <taxon>Saccharomycetaceae</taxon>
        <taxon>Saccharomyces</taxon>
    </lineage>
</organism>
<name>SPR3_YEAST</name>
<proteinExistence type="evidence at protein level"/>
<dbReference type="EMBL" id="L31767">
    <property type="protein sequence ID" value="AAC37482.1"/>
    <property type="molecule type" value="Genomic_DNA"/>
</dbReference>
<dbReference type="EMBL" id="U24129">
    <property type="protein sequence ID" value="AAC13870.1"/>
    <property type="molecule type" value="Genomic_DNA"/>
</dbReference>
<dbReference type="EMBL" id="Z72844">
    <property type="protein sequence ID" value="CAA97061.1"/>
    <property type="molecule type" value="Genomic_DNA"/>
</dbReference>
<dbReference type="EMBL" id="BK006941">
    <property type="protein sequence ID" value="DAA08155.1"/>
    <property type="molecule type" value="Genomic_DNA"/>
</dbReference>
<dbReference type="PIR" id="S48524">
    <property type="entry name" value="S48524"/>
</dbReference>
<dbReference type="RefSeq" id="NP_011573.3">
    <property type="nucleotide sequence ID" value="NM_001181188.3"/>
</dbReference>
<dbReference type="SMR" id="P41901"/>
<dbReference type="BioGRID" id="33304">
    <property type="interactions" value="131"/>
</dbReference>
<dbReference type="DIP" id="DIP-3011N"/>
<dbReference type="FunCoup" id="P41901">
    <property type="interactions" value="275"/>
</dbReference>
<dbReference type="IntAct" id="P41901">
    <property type="interactions" value="2"/>
</dbReference>
<dbReference type="MINT" id="P41901"/>
<dbReference type="STRING" id="4932.YGR059W"/>
<dbReference type="PaxDb" id="4932-YGR059W"/>
<dbReference type="PeptideAtlas" id="P41901"/>
<dbReference type="EnsemblFungi" id="YGR059W_mRNA">
    <property type="protein sequence ID" value="YGR059W"/>
    <property type="gene ID" value="YGR059W"/>
</dbReference>
<dbReference type="GeneID" id="852950"/>
<dbReference type="KEGG" id="sce:YGR059W"/>
<dbReference type="AGR" id="SGD:S000003291"/>
<dbReference type="SGD" id="S000003291">
    <property type="gene designation" value="SPR3"/>
</dbReference>
<dbReference type="VEuPathDB" id="FungiDB:YGR059W"/>
<dbReference type="eggNOG" id="KOG2655">
    <property type="taxonomic scope" value="Eukaryota"/>
</dbReference>
<dbReference type="HOGENOM" id="CLU_017718_8_0_1"/>
<dbReference type="InParanoid" id="P41901"/>
<dbReference type="OMA" id="KNYKCYE"/>
<dbReference type="OrthoDB" id="416553at2759"/>
<dbReference type="BioCyc" id="YEAST:G3O-30776-MONOMER"/>
<dbReference type="Reactome" id="R-SCE-111457">
    <property type="pathway name" value="Release of apoptotic factors from the mitochondria"/>
</dbReference>
<dbReference type="BioGRID-ORCS" id="852950">
    <property type="hits" value="2 hits in 10 CRISPR screens"/>
</dbReference>
<dbReference type="PRO" id="PR:P41901"/>
<dbReference type="Proteomes" id="UP000002311">
    <property type="component" value="Chromosome VII"/>
</dbReference>
<dbReference type="RNAct" id="P41901">
    <property type="molecule type" value="protein"/>
</dbReference>
<dbReference type="GO" id="GO:0005619">
    <property type="term" value="C:ascospore wall"/>
    <property type="evidence" value="ECO:0000314"/>
    <property type="project" value="SGD"/>
</dbReference>
<dbReference type="GO" id="GO:0032153">
    <property type="term" value="C:cell division site"/>
    <property type="evidence" value="ECO:0000318"/>
    <property type="project" value="GO_Central"/>
</dbReference>
<dbReference type="GO" id="GO:0005935">
    <property type="term" value="C:cellular bud neck"/>
    <property type="evidence" value="ECO:0007669"/>
    <property type="project" value="UniProtKB-SubCell"/>
</dbReference>
<dbReference type="GO" id="GO:0005829">
    <property type="term" value="C:cytosol"/>
    <property type="evidence" value="ECO:0007005"/>
    <property type="project" value="SGD"/>
</dbReference>
<dbReference type="GO" id="GO:0015630">
    <property type="term" value="C:microtubule cytoskeleton"/>
    <property type="evidence" value="ECO:0000318"/>
    <property type="project" value="GO_Central"/>
</dbReference>
<dbReference type="GO" id="GO:0005628">
    <property type="term" value="C:prospore membrane"/>
    <property type="evidence" value="ECO:0000314"/>
    <property type="project" value="SGD"/>
</dbReference>
<dbReference type="GO" id="GO:0031105">
    <property type="term" value="C:septin complex"/>
    <property type="evidence" value="ECO:0000314"/>
    <property type="project" value="SGD"/>
</dbReference>
<dbReference type="GO" id="GO:0005940">
    <property type="term" value="C:septin ring"/>
    <property type="evidence" value="ECO:0000318"/>
    <property type="project" value="GO_Central"/>
</dbReference>
<dbReference type="GO" id="GO:0005525">
    <property type="term" value="F:GTP binding"/>
    <property type="evidence" value="ECO:0007669"/>
    <property type="project" value="UniProtKB-KW"/>
</dbReference>
<dbReference type="GO" id="GO:0003924">
    <property type="term" value="F:GTPase activity"/>
    <property type="evidence" value="ECO:0000318"/>
    <property type="project" value="GO_Central"/>
</dbReference>
<dbReference type="GO" id="GO:0060090">
    <property type="term" value="F:molecular adaptor activity"/>
    <property type="evidence" value="ECO:0000318"/>
    <property type="project" value="GO_Central"/>
</dbReference>
<dbReference type="GO" id="GO:0005198">
    <property type="term" value="F:structural molecule activity"/>
    <property type="evidence" value="ECO:0000250"/>
    <property type="project" value="SGD"/>
</dbReference>
<dbReference type="GO" id="GO:0030437">
    <property type="term" value="P:ascospore formation"/>
    <property type="evidence" value="ECO:0000315"/>
    <property type="project" value="SGD"/>
</dbReference>
<dbReference type="GO" id="GO:0061640">
    <property type="term" value="P:cytoskeleton-dependent cytokinesis"/>
    <property type="evidence" value="ECO:0000318"/>
    <property type="project" value="GO_Central"/>
</dbReference>
<dbReference type="GO" id="GO:0008104">
    <property type="term" value="P:protein localization"/>
    <property type="evidence" value="ECO:0000318"/>
    <property type="project" value="GO_Central"/>
</dbReference>
<dbReference type="CDD" id="cd01850">
    <property type="entry name" value="CDC_Septin"/>
    <property type="match status" value="1"/>
</dbReference>
<dbReference type="FunFam" id="3.40.50.300:FF:002051">
    <property type="entry name" value="Spr3p"/>
    <property type="match status" value="1"/>
</dbReference>
<dbReference type="Gene3D" id="3.40.50.300">
    <property type="entry name" value="P-loop containing nucleotide triphosphate hydrolases"/>
    <property type="match status" value="1"/>
</dbReference>
<dbReference type="InterPro" id="IPR030379">
    <property type="entry name" value="G_SEPTIN_dom"/>
</dbReference>
<dbReference type="InterPro" id="IPR027417">
    <property type="entry name" value="P-loop_NTPase"/>
</dbReference>
<dbReference type="InterPro" id="IPR016491">
    <property type="entry name" value="Septin"/>
</dbReference>
<dbReference type="PANTHER" id="PTHR18884">
    <property type="entry name" value="SEPTIN"/>
    <property type="match status" value="1"/>
</dbReference>
<dbReference type="Pfam" id="PF00735">
    <property type="entry name" value="Septin"/>
    <property type="match status" value="1"/>
</dbReference>
<dbReference type="PIRSF" id="PIRSF006698">
    <property type="entry name" value="Septin"/>
    <property type="match status" value="1"/>
</dbReference>
<dbReference type="SUPFAM" id="SSF52540">
    <property type="entry name" value="P-loop containing nucleoside triphosphate hydrolases"/>
    <property type="match status" value="1"/>
</dbReference>
<dbReference type="PROSITE" id="PS51719">
    <property type="entry name" value="G_SEPTIN"/>
    <property type="match status" value="1"/>
</dbReference>
<sequence length="512" mass="59845">MKSKGSRLSTDCPVEFPKIVSGFAEEVKIRRQSSQGQYAVDSHPPKSPELKHRRQRSSSFVNGKCRNRDLPLLDNKKAQEINTNSHGQDIGIKNLPRQRELLNAKNGIDFTLMVAGQSGLGKTTFINSLFSTSLIDDDIKENKPIIRYKSIVEGDGTHLNFNVIDTPGFGNNMDNAFTWRTMVNYIDEEIRSYIFQEEQPDRTKMVDNRVHCCLYFLRPSNKGIDTLDVVTMKKLAKRVNLIPVIAKSDLLTKEELKNFKTQVREIIRVQDIPVCFFFGDEVLNATQDIFQKYPFSIIASNEYIFNEKGEKVKGRQYKWGAVDIENEKYCDFKILQKTIFDWNLIDLVESTEDYYEKCRSEMLRTRLLKARDCLTTKSVDITEEQRKFLEEEMNFDEIEENKLKNYKCYEIINKTVMDKVATEWDPEFITRQLEAKKKFNELSNREISKFRDWKKSLFMEQENFNQEIEQLNHKLENLQLECQDLEYKLLIGKSSNSHSTDSATLVNVHIKR</sequence>
<gene>
    <name type="primary">SPR3</name>
    <name type="ordered locus">YGR059W</name>
</gene>
<protein>
    <recommendedName>
        <fullName>Sporulation-regulated protein 3</fullName>
    </recommendedName>
</protein>
<feature type="chain" id="PRO_0000173502" description="Sporulation-regulated protein 3">
    <location>
        <begin position="1"/>
        <end position="512"/>
    </location>
</feature>
<feature type="domain" description="Septin-type G" evidence="3">
    <location>
        <begin position="106"/>
        <end position="365"/>
    </location>
</feature>
<feature type="region of interest" description="Disordered" evidence="4">
    <location>
        <begin position="31"/>
        <end position="68"/>
    </location>
</feature>
<feature type="region of interest" description="G1 motif" evidence="3">
    <location>
        <begin position="116"/>
        <end position="123"/>
    </location>
</feature>
<feature type="region of interest" description="G3 motif" evidence="3">
    <location>
        <begin position="165"/>
        <end position="168"/>
    </location>
</feature>
<feature type="region of interest" description="G4 motif" evidence="3">
    <location>
        <begin position="246"/>
        <end position="249"/>
    </location>
</feature>
<feature type="coiled-coil region" evidence="2">
    <location>
        <begin position="376"/>
        <end position="406"/>
    </location>
</feature>
<feature type="coiled-coil region" evidence="2">
    <location>
        <begin position="451"/>
        <end position="496"/>
    </location>
</feature>
<feature type="binding site" evidence="1">
    <location>
        <begin position="116"/>
        <end position="123"/>
    </location>
    <ligand>
        <name>GTP</name>
        <dbReference type="ChEBI" id="CHEBI:37565"/>
    </ligand>
</feature>
<feature type="binding site" evidence="1">
    <location>
        <position position="168"/>
    </location>
    <ligand>
        <name>GTP</name>
        <dbReference type="ChEBI" id="CHEBI:37565"/>
    </ligand>
</feature>
<feature type="binding site" evidence="1">
    <location>
        <begin position="247"/>
        <end position="255"/>
    </location>
    <ligand>
        <name>GTP</name>
        <dbReference type="ChEBI" id="CHEBI:37565"/>
    </ligand>
</feature>
<feature type="binding site" evidence="1">
    <location>
        <position position="315"/>
    </location>
    <ligand>
        <name>GTP</name>
        <dbReference type="ChEBI" id="CHEBI:37565"/>
    </ligand>
</feature>
<feature type="sequence conflict" description="In Ref. 2; AAC13870." evidence="6" ref="2">
    <original>E</original>
    <variation>D</variation>
    <location>
        <position position="26"/>
    </location>
</feature>
<feature type="sequence conflict" description="In Ref. 2; AAC13870." evidence="6" ref="2">
    <original>L</original>
    <variation>C</variation>
    <location>
        <position position="250"/>
    </location>
</feature>
<feature type="sequence conflict" description="In Ref. 2; AAC13870." evidence="6" ref="2">
    <original>V</original>
    <variation>L</variation>
    <location>
        <position position="263"/>
    </location>
</feature>
<feature type="sequence conflict" description="In Ref. 2; AAC13870." evidence="6" ref="2">
    <original>Y</original>
    <variation>H</variation>
    <location>
        <position position="317"/>
    </location>
</feature>
<feature type="sequence conflict" description="In Ref. 2; AAC13870." evidence="6" ref="2">
    <original>E</original>
    <variation>G</variation>
    <location>
        <position position="481"/>
    </location>
</feature>
<reference key="1">
    <citation type="journal article" date="1996" name="J. Cell Biol.">
        <title>Identification of a developmentally regulated septin and involvement of the septins in spore formation in Saccharomyces cerevisiae.</title>
        <authorList>
            <person name="Fares H."/>
            <person name="Goetsch L."/>
            <person name="Pringle J.R."/>
        </authorList>
    </citation>
    <scope>NUCLEOTIDE SEQUENCE [GENOMIC DNA]</scope>
</reference>
<reference key="2">
    <citation type="journal article" date="1995" name="Gene">
        <title>The SPR3 gene encodes a sporulation-specific homologue of the yeast CDC3/10/11/12 family of bud neck microfilaments and is regulated by ABFI.</title>
        <authorList>
            <person name="Ozsarac N."/>
            <person name="Bhattacharyya M."/>
            <person name="Dawes I.W."/>
            <person name="Clancy M.J."/>
        </authorList>
    </citation>
    <scope>NUCLEOTIDE SEQUENCE [GENOMIC DNA]</scope>
</reference>
<reference key="3">
    <citation type="journal article" date="1997" name="Nature">
        <title>The nucleotide sequence of Saccharomyces cerevisiae chromosome VII.</title>
        <authorList>
            <person name="Tettelin H."/>
            <person name="Agostoni-Carbone M.L."/>
            <person name="Albermann K."/>
            <person name="Albers M."/>
            <person name="Arroyo J."/>
            <person name="Backes U."/>
            <person name="Barreiros T."/>
            <person name="Bertani I."/>
            <person name="Bjourson A.J."/>
            <person name="Brueckner M."/>
            <person name="Bruschi C.V."/>
            <person name="Carignani G."/>
            <person name="Castagnoli L."/>
            <person name="Cerdan E."/>
            <person name="Clemente M.L."/>
            <person name="Coblenz A."/>
            <person name="Coglievina M."/>
            <person name="Coissac E."/>
            <person name="Defoor E."/>
            <person name="Del Bino S."/>
            <person name="Delius H."/>
            <person name="Delneri D."/>
            <person name="de Wergifosse P."/>
            <person name="Dujon B."/>
            <person name="Durand P."/>
            <person name="Entian K.-D."/>
            <person name="Eraso P."/>
            <person name="Escribano V."/>
            <person name="Fabiani L."/>
            <person name="Fartmann B."/>
            <person name="Feroli F."/>
            <person name="Feuermann M."/>
            <person name="Frontali L."/>
            <person name="Garcia-Gonzalez M."/>
            <person name="Garcia-Saez M.I."/>
            <person name="Goffeau A."/>
            <person name="Guerreiro P."/>
            <person name="Hani J."/>
            <person name="Hansen M."/>
            <person name="Hebling U."/>
            <person name="Hernandez K."/>
            <person name="Heumann K."/>
            <person name="Hilger F."/>
            <person name="Hofmann B."/>
            <person name="Indge K.J."/>
            <person name="James C.M."/>
            <person name="Klima R."/>
            <person name="Koetter P."/>
            <person name="Kramer B."/>
            <person name="Kramer W."/>
            <person name="Lauquin G."/>
            <person name="Leuther H."/>
            <person name="Louis E.J."/>
            <person name="Maillier E."/>
            <person name="Marconi A."/>
            <person name="Martegani E."/>
            <person name="Mazon M.J."/>
            <person name="Mazzoni C."/>
            <person name="McReynolds A.D.K."/>
            <person name="Melchioretto P."/>
            <person name="Mewes H.-W."/>
            <person name="Minenkova O."/>
            <person name="Mueller-Auer S."/>
            <person name="Nawrocki A."/>
            <person name="Netter P."/>
            <person name="Neu R."/>
            <person name="Nombela C."/>
            <person name="Oliver S.G."/>
            <person name="Panzeri L."/>
            <person name="Paoluzi S."/>
            <person name="Plevani P."/>
            <person name="Portetelle D."/>
            <person name="Portillo F."/>
            <person name="Potier S."/>
            <person name="Purnelle B."/>
            <person name="Rieger M."/>
            <person name="Riles L."/>
            <person name="Rinaldi T."/>
            <person name="Robben J."/>
            <person name="Rodrigues-Pousada C."/>
            <person name="Rodriguez-Belmonte E."/>
            <person name="Rodriguez-Torres A.M."/>
            <person name="Rose M."/>
            <person name="Ruzzi M."/>
            <person name="Saliola M."/>
            <person name="Sanchez-Perez M."/>
            <person name="Schaefer B."/>
            <person name="Schaefer M."/>
            <person name="Scharfe M."/>
            <person name="Schmidheini T."/>
            <person name="Schreer A."/>
            <person name="Skala J."/>
            <person name="Souciet J.-L."/>
            <person name="Steensma H.Y."/>
            <person name="Talla E."/>
            <person name="Thierry A."/>
            <person name="Vandenbol M."/>
            <person name="van der Aart Q.J.M."/>
            <person name="Van Dyck L."/>
            <person name="Vanoni M."/>
            <person name="Verhasselt P."/>
            <person name="Voet M."/>
            <person name="Volckaert G."/>
            <person name="Wambutt R."/>
            <person name="Watson M.D."/>
            <person name="Weber N."/>
            <person name="Wedler E."/>
            <person name="Wedler H."/>
            <person name="Wipfli P."/>
            <person name="Wolf K."/>
            <person name="Wright L.F."/>
            <person name="Zaccaria P."/>
            <person name="Zimmermann M."/>
            <person name="Zollner A."/>
            <person name="Kleine K."/>
        </authorList>
    </citation>
    <scope>NUCLEOTIDE SEQUENCE [LARGE SCALE GENOMIC DNA]</scope>
    <source>
        <strain>ATCC 204508 / S288c</strain>
    </source>
</reference>
<reference key="4">
    <citation type="journal article" date="2014" name="G3 (Bethesda)">
        <title>The reference genome sequence of Saccharomyces cerevisiae: Then and now.</title>
        <authorList>
            <person name="Engel S.R."/>
            <person name="Dietrich F.S."/>
            <person name="Fisk D.G."/>
            <person name="Binkley G."/>
            <person name="Balakrishnan R."/>
            <person name="Costanzo M.C."/>
            <person name="Dwight S.S."/>
            <person name="Hitz B.C."/>
            <person name="Karra K."/>
            <person name="Nash R.S."/>
            <person name="Weng S."/>
            <person name="Wong E.D."/>
            <person name="Lloyd P."/>
            <person name="Skrzypek M.S."/>
            <person name="Miyasato S.R."/>
            <person name="Simison M."/>
            <person name="Cherry J.M."/>
        </authorList>
    </citation>
    <scope>GENOME REANNOTATION</scope>
    <source>
        <strain>ATCC 204508 / S288c</strain>
    </source>
</reference>
<reference key="5">
    <citation type="journal article" date="1996" name="Microbiology">
        <title>SPR28, a sixth member of the septin gene family in Saccharomyces cerevisiae that is expressed specifically in sporulating cells.</title>
        <authorList>
            <person name="de Virgilio C."/>
            <person name="DeMarini D.J."/>
            <person name="Pringle J.R."/>
        </authorList>
    </citation>
    <scope>INTERACTION WITH CDC11 AND SPR28</scope>
</reference>
<evidence type="ECO:0000250" key="1"/>
<evidence type="ECO:0000255" key="2"/>
<evidence type="ECO:0000255" key="3">
    <source>
        <dbReference type="PROSITE-ProRule" id="PRU01056"/>
    </source>
</evidence>
<evidence type="ECO:0000256" key="4">
    <source>
        <dbReference type="SAM" id="MobiDB-lite"/>
    </source>
</evidence>
<evidence type="ECO:0000269" key="5">
    <source>
    </source>
</evidence>
<evidence type="ECO:0000305" key="6"/>
<comment type="function">
    <text evidence="1">Septins are GTPases involved in cytokinesis that assemble into filaments and form a ring at the cleavage site. May act by recruiting MYO1 and HOF1, a protein involved in septation, to the site of cleavage. Septins are also involved in cell morphogenesis, bud site selection, chitin deposition, cell cycle regulation, cell compartmentalization and spore wall formation (By similarity).</text>
</comment>
<comment type="subunit">
    <text evidence="5">Interacts with other septin proteins such as SPR28 to form a ring at the bud neck.</text>
</comment>
<comment type="subcellular location">
    <subcellularLocation>
        <location evidence="1">Prospore membrane</location>
        <topology evidence="1">Peripheral membrane protein</topology>
    </subcellularLocation>
    <subcellularLocation>
        <location evidence="1">Bud neck</location>
    </subcellularLocation>
    <text evidence="1">Present at the bud neck during cell division. Probably interacts with phosphoinosides such as phosphatidylinositol 4-phosphate or phosphatidylinositol 5-phosphate (By similarity). Localized to the leading edges of the membrane sacs that form near the spindle-pole bodies and gradually extend to engulf the nuclear lobes that contain the haploid chromosome sets, thus forming the spores.</text>
</comment>
<comment type="developmental stage">
    <text>Sporulation-specific.</text>
</comment>
<comment type="similarity">
    <text evidence="3">Belongs to the TRAFAC class TrmE-Era-EngA-EngB-Septin-like GTPase superfamily. Septin GTPase family.</text>
</comment>